<organism>
    <name type="scientific">Pseudoalteromonas translucida (strain TAC 125)</name>
    <dbReference type="NCBI Taxonomy" id="326442"/>
    <lineage>
        <taxon>Bacteria</taxon>
        <taxon>Pseudomonadati</taxon>
        <taxon>Pseudomonadota</taxon>
        <taxon>Gammaproteobacteria</taxon>
        <taxon>Alteromonadales</taxon>
        <taxon>Pseudoalteromonadaceae</taxon>
        <taxon>Pseudoalteromonas</taxon>
    </lineage>
</organism>
<protein>
    <recommendedName>
        <fullName evidence="1">GTP cyclohydrolase FolE2</fullName>
        <ecNumber evidence="1">3.5.4.16</ecNumber>
    </recommendedName>
</protein>
<accession>Q3ILJ5</accession>
<comment type="function">
    <text evidence="1">Converts GTP to 7,8-dihydroneopterin triphosphate.</text>
</comment>
<comment type="catalytic activity">
    <reaction evidence="1">
        <text>GTP + H2O = 7,8-dihydroneopterin 3'-triphosphate + formate + H(+)</text>
        <dbReference type="Rhea" id="RHEA:17473"/>
        <dbReference type="ChEBI" id="CHEBI:15377"/>
        <dbReference type="ChEBI" id="CHEBI:15378"/>
        <dbReference type="ChEBI" id="CHEBI:15740"/>
        <dbReference type="ChEBI" id="CHEBI:37565"/>
        <dbReference type="ChEBI" id="CHEBI:58462"/>
        <dbReference type="EC" id="3.5.4.16"/>
    </reaction>
</comment>
<comment type="pathway">
    <text evidence="1">Cofactor biosynthesis; 7,8-dihydroneopterin triphosphate biosynthesis; 7,8-dihydroneopterin triphosphate from GTP: step 1/1.</text>
</comment>
<comment type="similarity">
    <text evidence="1">Belongs to the GTP cyclohydrolase IV family.</text>
</comment>
<comment type="sequence caution" evidence="2">
    <conflict type="erroneous initiation">
        <sequence resource="EMBL-CDS" id="CAI85637"/>
    </conflict>
</comment>
<keyword id="KW-0378">Hydrolase</keyword>
<keyword id="KW-1185">Reference proteome</keyword>
<dbReference type="EC" id="3.5.4.16" evidence="1"/>
<dbReference type="EMBL" id="CR954246">
    <property type="protein sequence ID" value="CAI85637.1"/>
    <property type="status" value="ALT_INIT"/>
    <property type="molecule type" value="Genomic_DNA"/>
</dbReference>
<dbReference type="SMR" id="Q3ILJ5"/>
<dbReference type="STRING" id="326442.PSHAa0549"/>
<dbReference type="KEGG" id="pha:PSHAa0549"/>
<dbReference type="PATRIC" id="fig|326442.8.peg.518"/>
<dbReference type="eggNOG" id="COG1469">
    <property type="taxonomic scope" value="Bacteria"/>
</dbReference>
<dbReference type="HOGENOM" id="CLU_062816_0_0_6"/>
<dbReference type="UniPathway" id="UPA00848">
    <property type="reaction ID" value="UER00151"/>
</dbReference>
<dbReference type="Proteomes" id="UP000006843">
    <property type="component" value="Chromosome I"/>
</dbReference>
<dbReference type="GO" id="GO:0003934">
    <property type="term" value="F:GTP cyclohydrolase I activity"/>
    <property type="evidence" value="ECO:0007669"/>
    <property type="project" value="UniProtKB-UniRule"/>
</dbReference>
<dbReference type="GO" id="GO:0046654">
    <property type="term" value="P:tetrahydrofolate biosynthetic process"/>
    <property type="evidence" value="ECO:0007669"/>
    <property type="project" value="UniProtKB-UniRule"/>
</dbReference>
<dbReference type="Gene3D" id="3.10.270.10">
    <property type="entry name" value="Urate Oxidase"/>
    <property type="match status" value="1"/>
</dbReference>
<dbReference type="HAMAP" id="MF_01527_B">
    <property type="entry name" value="GTP_cyclohydrol_B"/>
    <property type="match status" value="1"/>
</dbReference>
<dbReference type="InterPro" id="IPR022838">
    <property type="entry name" value="GTP_cyclohydrolase_FolE2"/>
</dbReference>
<dbReference type="InterPro" id="IPR003801">
    <property type="entry name" value="GTP_cyclohydrolase_FolE2/MptA"/>
</dbReference>
<dbReference type="NCBIfam" id="NF010200">
    <property type="entry name" value="PRK13674.1-1"/>
    <property type="match status" value="1"/>
</dbReference>
<dbReference type="PANTHER" id="PTHR36445">
    <property type="entry name" value="GTP CYCLOHYDROLASE MPTA"/>
    <property type="match status" value="1"/>
</dbReference>
<dbReference type="PANTHER" id="PTHR36445:SF1">
    <property type="entry name" value="GTP CYCLOHYDROLASE MPTA"/>
    <property type="match status" value="1"/>
</dbReference>
<dbReference type="Pfam" id="PF02649">
    <property type="entry name" value="GCHY-1"/>
    <property type="match status" value="1"/>
</dbReference>
<reference key="1">
    <citation type="journal article" date="2005" name="Genome Res.">
        <title>Coping with cold: the genome of the versatile marine Antarctica bacterium Pseudoalteromonas haloplanktis TAC125.</title>
        <authorList>
            <person name="Medigue C."/>
            <person name="Krin E."/>
            <person name="Pascal G."/>
            <person name="Barbe V."/>
            <person name="Bernsel A."/>
            <person name="Bertin P.N."/>
            <person name="Cheung F."/>
            <person name="Cruveiller S."/>
            <person name="D'Amico S."/>
            <person name="Duilio A."/>
            <person name="Fang G."/>
            <person name="Feller G."/>
            <person name="Ho C."/>
            <person name="Mangenot S."/>
            <person name="Marino G."/>
            <person name="Nilsson J."/>
            <person name="Parrilli E."/>
            <person name="Rocha E.P.C."/>
            <person name="Rouy Z."/>
            <person name="Sekowska A."/>
            <person name="Tutino M.L."/>
            <person name="Vallenet D."/>
            <person name="von Heijne G."/>
            <person name="Danchin A."/>
        </authorList>
    </citation>
    <scope>NUCLEOTIDE SEQUENCE [LARGE SCALE GENOMIC DNA]</scope>
    <source>
        <strain>TAC 125</strain>
    </source>
</reference>
<proteinExistence type="inferred from homology"/>
<sequence>MPDIANTAPALQTGTLDWVGMGEIELPFIFESHGITPVTVNAKARAFVNLHKEDAKGIHMSRLFLALDTLSTEQQVNPQTLAQALDFFISSHEGLSDKALIEFKFELPLRRKSLLSDKAGWKSYPVILTSTIEQGVINYELSVDVTYSSTCPCSAALARQLIQNAFAEKFSQETLSQKEALEWLGTTQGIVATPHSQRSIANVKVKLDSNITQFDVVNLINTIEDELKTPVQAAVKREDEQEFARLNGQNLMFCEDAARKIKALLETQQYSDYWLQINHYESLHAHDALAIAVKGVAGGYRA</sequence>
<feature type="chain" id="PRO_0000289506" description="GTP cyclohydrolase FolE2">
    <location>
        <begin position="1"/>
        <end position="302"/>
    </location>
</feature>
<feature type="site" description="May be catalytically important" evidence="1">
    <location>
        <position position="151"/>
    </location>
</feature>
<evidence type="ECO:0000255" key="1">
    <source>
        <dbReference type="HAMAP-Rule" id="MF_01527"/>
    </source>
</evidence>
<evidence type="ECO:0000305" key="2"/>
<name>GCH4_PSET1</name>
<gene>
    <name evidence="1" type="primary">folE2</name>
    <name type="ordered locus">PSHAa0549</name>
</gene>